<comment type="function">
    <text evidence="1">Binds as a heterodimer with protein bS6 to the central domain of the 16S rRNA, where it helps stabilize the platform of the 30S subunit.</text>
</comment>
<comment type="subunit">
    <text evidence="1">Part of the 30S ribosomal subunit. Forms a tight heterodimer with protein bS6.</text>
</comment>
<comment type="similarity">
    <text evidence="1">Belongs to the bacterial ribosomal protein bS18 family.</text>
</comment>
<reference key="1">
    <citation type="submission" date="2007-03" db="EMBL/GenBank/DDBJ databases">
        <title>Complete sequence of Prosthecochloris vibrioformis DSM 265.</title>
        <authorList>
            <consortium name="US DOE Joint Genome Institute"/>
            <person name="Copeland A."/>
            <person name="Lucas S."/>
            <person name="Lapidus A."/>
            <person name="Barry K."/>
            <person name="Detter J.C."/>
            <person name="Glavina del Rio T."/>
            <person name="Hammon N."/>
            <person name="Israni S."/>
            <person name="Pitluck S."/>
            <person name="Schmutz J."/>
            <person name="Larimer F."/>
            <person name="Land M."/>
            <person name="Hauser L."/>
            <person name="Mikhailova N."/>
            <person name="Li T."/>
            <person name="Overmann J."/>
            <person name="Schuster S.C."/>
            <person name="Bryant D.A."/>
            <person name="Richardson P."/>
        </authorList>
    </citation>
    <scope>NUCLEOTIDE SEQUENCE [LARGE SCALE GENOMIC DNA]</scope>
    <source>
        <strain>DSM 265 / 1930</strain>
    </source>
</reference>
<gene>
    <name evidence="1" type="primary">rpsR</name>
    <name type="ordered locus">Cvib_0183</name>
</gene>
<evidence type="ECO:0000255" key="1">
    <source>
        <dbReference type="HAMAP-Rule" id="MF_00270"/>
    </source>
</evidence>
<evidence type="ECO:0000256" key="2">
    <source>
        <dbReference type="SAM" id="MobiDB-lite"/>
    </source>
</evidence>
<evidence type="ECO:0000305" key="3"/>
<sequence length="90" mass="10440">MKPMRQKPGRGQGNKSISNALASKKKVSKNQAVFFDYRDERKLKRFINDQGKMIPRRITGLSAKEQNLLTHSVKWARFLAVIPYVSDEYK</sequence>
<organism>
    <name type="scientific">Chlorobium phaeovibrioides (strain DSM 265 / 1930)</name>
    <name type="common">Prosthecochloris vibrioformis (strain DSM 265)</name>
    <dbReference type="NCBI Taxonomy" id="290318"/>
    <lineage>
        <taxon>Bacteria</taxon>
        <taxon>Pseudomonadati</taxon>
        <taxon>Chlorobiota</taxon>
        <taxon>Chlorobiia</taxon>
        <taxon>Chlorobiales</taxon>
        <taxon>Chlorobiaceae</taxon>
        <taxon>Chlorobium/Pelodictyon group</taxon>
        <taxon>Chlorobium</taxon>
    </lineage>
</organism>
<proteinExistence type="inferred from homology"/>
<dbReference type="EMBL" id="CP000607">
    <property type="protein sequence ID" value="ABP36206.1"/>
    <property type="molecule type" value="Genomic_DNA"/>
</dbReference>
<dbReference type="SMR" id="A4SCJ7"/>
<dbReference type="STRING" id="290318.Cvib_0183"/>
<dbReference type="KEGG" id="pvi:Cvib_0183"/>
<dbReference type="eggNOG" id="COG0238">
    <property type="taxonomic scope" value="Bacteria"/>
</dbReference>
<dbReference type="HOGENOM" id="CLU_148710_0_3_10"/>
<dbReference type="OrthoDB" id="9812008at2"/>
<dbReference type="GO" id="GO:0022627">
    <property type="term" value="C:cytosolic small ribosomal subunit"/>
    <property type="evidence" value="ECO:0007669"/>
    <property type="project" value="TreeGrafter"/>
</dbReference>
<dbReference type="GO" id="GO:0070181">
    <property type="term" value="F:small ribosomal subunit rRNA binding"/>
    <property type="evidence" value="ECO:0007669"/>
    <property type="project" value="TreeGrafter"/>
</dbReference>
<dbReference type="GO" id="GO:0003735">
    <property type="term" value="F:structural constituent of ribosome"/>
    <property type="evidence" value="ECO:0007669"/>
    <property type="project" value="InterPro"/>
</dbReference>
<dbReference type="GO" id="GO:0006412">
    <property type="term" value="P:translation"/>
    <property type="evidence" value="ECO:0007669"/>
    <property type="project" value="UniProtKB-UniRule"/>
</dbReference>
<dbReference type="Gene3D" id="4.10.640.10">
    <property type="entry name" value="Ribosomal protein S18"/>
    <property type="match status" value="1"/>
</dbReference>
<dbReference type="HAMAP" id="MF_00270">
    <property type="entry name" value="Ribosomal_bS18"/>
    <property type="match status" value="1"/>
</dbReference>
<dbReference type="InterPro" id="IPR001648">
    <property type="entry name" value="Ribosomal_bS18"/>
</dbReference>
<dbReference type="InterPro" id="IPR036870">
    <property type="entry name" value="Ribosomal_bS18_sf"/>
</dbReference>
<dbReference type="NCBIfam" id="TIGR00165">
    <property type="entry name" value="S18"/>
    <property type="match status" value="1"/>
</dbReference>
<dbReference type="PANTHER" id="PTHR13479">
    <property type="entry name" value="30S RIBOSOMAL PROTEIN S18"/>
    <property type="match status" value="1"/>
</dbReference>
<dbReference type="PANTHER" id="PTHR13479:SF40">
    <property type="entry name" value="SMALL RIBOSOMAL SUBUNIT PROTEIN BS18M"/>
    <property type="match status" value="1"/>
</dbReference>
<dbReference type="Pfam" id="PF01084">
    <property type="entry name" value="Ribosomal_S18"/>
    <property type="match status" value="1"/>
</dbReference>
<dbReference type="PRINTS" id="PR00974">
    <property type="entry name" value="RIBOSOMALS18"/>
</dbReference>
<dbReference type="SUPFAM" id="SSF46911">
    <property type="entry name" value="Ribosomal protein S18"/>
    <property type="match status" value="1"/>
</dbReference>
<protein>
    <recommendedName>
        <fullName evidence="1">Small ribosomal subunit protein bS18</fullName>
    </recommendedName>
    <alternativeName>
        <fullName evidence="3">30S ribosomal protein S18</fullName>
    </alternativeName>
</protein>
<name>RS18_CHLPM</name>
<keyword id="KW-0687">Ribonucleoprotein</keyword>
<keyword id="KW-0689">Ribosomal protein</keyword>
<keyword id="KW-0694">RNA-binding</keyword>
<keyword id="KW-0699">rRNA-binding</keyword>
<feature type="chain" id="PRO_0000345527" description="Small ribosomal subunit protein bS18">
    <location>
        <begin position="1"/>
        <end position="90"/>
    </location>
</feature>
<feature type="region of interest" description="Disordered" evidence="2">
    <location>
        <begin position="1"/>
        <end position="24"/>
    </location>
</feature>
<accession>A4SCJ7</accession>